<name>HIS6_LACP3</name>
<keyword id="KW-0028">Amino-acid biosynthesis</keyword>
<keyword id="KW-0963">Cytoplasm</keyword>
<keyword id="KW-0368">Histidine biosynthesis</keyword>
<keyword id="KW-0456">Lyase</keyword>
<keyword id="KW-1185">Reference proteome</keyword>
<evidence type="ECO:0000255" key="1">
    <source>
        <dbReference type="HAMAP-Rule" id="MF_01013"/>
    </source>
</evidence>
<comment type="function">
    <text evidence="1">IGPS catalyzes the conversion of PRFAR and glutamine to IGP, AICAR and glutamate. The HisF subunit catalyzes the cyclization activity that produces IGP and AICAR from PRFAR using the ammonia provided by the HisH subunit.</text>
</comment>
<comment type="catalytic activity">
    <reaction evidence="1">
        <text>5-[(5-phospho-1-deoxy-D-ribulos-1-ylimino)methylamino]-1-(5-phospho-beta-D-ribosyl)imidazole-4-carboxamide + L-glutamine = D-erythro-1-(imidazol-4-yl)glycerol 3-phosphate + 5-amino-1-(5-phospho-beta-D-ribosyl)imidazole-4-carboxamide + L-glutamate + H(+)</text>
        <dbReference type="Rhea" id="RHEA:24793"/>
        <dbReference type="ChEBI" id="CHEBI:15378"/>
        <dbReference type="ChEBI" id="CHEBI:29985"/>
        <dbReference type="ChEBI" id="CHEBI:58278"/>
        <dbReference type="ChEBI" id="CHEBI:58359"/>
        <dbReference type="ChEBI" id="CHEBI:58475"/>
        <dbReference type="ChEBI" id="CHEBI:58525"/>
        <dbReference type="EC" id="4.3.2.10"/>
    </reaction>
</comment>
<comment type="pathway">
    <text evidence="1">Amino-acid biosynthesis; L-histidine biosynthesis; L-histidine from 5-phospho-alpha-D-ribose 1-diphosphate: step 5/9.</text>
</comment>
<comment type="subunit">
    <text evidence="1">Heterodimer of HisH and HisF.</text>
</comment>
<comment type="subcellular location">
    <subcellularLocation>
        <location evidence="1">Cytoplasm</location>
    </subcellularLocation>
</comment>
<comment type="similarity">
    <text evidence="1">Belongs to the HisA/HisF family.</text>
</comment>
<gene>
    <name evidence="1" type="primary">hisF</name>
    <name type="ordered locus">LSEI_1429</name>
</gene>
<reference key="1">
    <citation type="journal article" date="2006" name="Proc. Natl. Acad. Sci. U.S.A.">
        <title>Comparative genomics of the lactic acid bacteria.</title>
        <authorList>
            <person name="Makarova K.S."/>
            <person name="Slesarev A."/>
            <person name="Wolf Y.I."/>
            <person name="Sorokin A."/>
            <person name="Mirkin B."/>
            <person name="Koonin E.V."/>
            <person name="Pavlov A."/>
            <person name="Pavlova N."/>
            <person name="Karamychev V."/>
            <person name="Polouchine N."/>
            <person name="Shakhova V."/>
            <person name="Grigoriev I."/>
            <person name="Lou Y."/>
            <person name="Rohksar D."/>
            <person name="Lucas S."/>
            <person name="Huang K."/>
            <person name="Goodstein D.M."/>
            <person name="Hawkins T."/>
            <person name="Plengvidhya V."/>
            <person name="Welker D."/>
            <person name="Hughes J."/>
            <person name="Goh Y."/>
            <person name="Benson A."/>
            <person name="Baldwin K."/>
            <person name="Lee J.-H."/>
            <person name="Diaz-Muniz I."/>
            <person name="Dosti B."/>
            <person name="Smeianov V."/>
            <person name="Wechter W."/>
            <person name="Barabote R."/>
            <person name="Lorca G."/>
            <person name="Altermann E."/>
            <person name="Barrangou R."/>
            <person name="Ganesan B."/>
            <person name="Xie Y."/>
            <person name="Rawsthorne H."/>
            <person name="Tamir D."/>
            <person name="Parker C."/>
            <person name="Breidt F."/>
            <person name="Broadbent J.R."/>
            <person name="Hutkins R."/>
            <person name="O'Sullivan D."/>
            <person name="Steele J."/>
            <person name="Unlu G."/>
            <person name="Saier M.H. Jr."/>
            <person name="Klaenhammer T."/>
            <person name="Richardson P."/>
            <person name="Kozyavkin S."/>
            <person name="Weimer B.C."/>
            <person name="Mills D.A."/>
        </authorList>
    </citation>
    <scope>NUCLEOTIDE SEQUENCE [LARGE SCALE GENOMIC DNA]</scope>
    <source>
        <strain>ATCC 334 / BCRC 17002 / CCUG 31169 / CIP 107868 / KCTC 3260 / NRRL B-441</strain>
    </source>
</reference>
<proteinExistence type="inferred from homology"/>
<dbReference type="EC" id="4.3.2.10" evidence="1"/>
<dbReference type="EMBL" id="CP000423">
    <property type="protein sequence ID" value="ABJ70207.1"/>
    <property type="molecule type" value="Genomic_DNA"/>
</dbReference>
<dbReference type="RefSeq" id="WP_003565468.1">
    <property type="nucleotide sequence ID" value="NC_008526.1"/>
</dbReference>
<dbReference type="RefSeq" id="YP_806649.1">
    <property type="nucleotide sequence ID" value="NC_008526.1"/>
</dbReference>
<dbReference type="SMR" id="Q039B5"/>
<dbReference type="STRING" id="321967.LSEI_1429"/>
<dbReference type="PaxDb" id="321967-LSEI_1429"/>
<dbReference type="GeneID" id="57090094"/>
<dbReference type="KEGG" id="lca:LSEI_1429"/>
<dbReference type="PATRIC" id="fig|321967.11.peg.1409"/>
<dbReference type="HOGENOM" id="CLU_048577_4_0_9"/>
<dbReference type="UniPathway" id="UPA00031">
    <property type="reaction ID" value="UER00010"/>
</dbReference>
<dbReference type="Proteomes" id="UP000001651">
    <property type="component" value="Chromosome"/>
</dbReference>
<dbReference type="GO" id="GO:0005737">
    <property type="term" value="C:cytoplasm"/>
    <property type="evidence" value="ECO:0007669"/>
    <property type="project" value="UniProtKB-SubCell"/>
</dbReference>
<dbReference type="GO" id="GO:0000107">
    <property type="term" value="F:imidazoleglycerol-phosphate synthase activity"/>
    <property type="evidence" value="ECO:0007669"/>
    <property type="project" value="UniProtKB-UniRule"/>
</dbReference>
<dbReference type="GO" id="GO:0016829">
    <property type="term" value="F:lyase activity"/>
    <property type="evidence" value="ECO:0007669"/>
    <property type="project" value="UniProtKB-KW"/>
</dbReference>
<dbReference type="GO" id="GO:0000105">
    <property type="term" value="P:L-histidine biosynthetic process"/>
    <property type="evidence" value="ECO:0007669"/>
    <property type="project" value="UniProtKB-UniRule"/>
</dbReference>
<dbReference type="CDD" id="cd04731">
    <property type="entry name" value="HisF"/>
    <property type="match status" value="1"/>
</dbReference>
<dbReference type="Gene3D" id="3.20.20.70">
    <property type="entry name" value="Aldolase class I"/>
    <property type="match status" value="1"/>
</dbReference>
<dbReference type="HAMAP" id="MF_01013">
    <property type="entry name" value="HisF"/>
    <property type="match status" value="1"/>
</dbReference>
<dbReference type="InterPro" id="IPR013785">
    <property type="entry name" value="Aldolase_TIM"/>
</dbReference>
<dbReference type="InterPro" id="IPR006062">
    <property type="entry name" value="His_biosynth"/>
</dbReference>
<dbReference type="InterPro" id="IPR004651">
    <property type="entry name" value="HisF"/>
</dbReference>
<dbReference type="InterPro" id="IPR050064">
    <property type="entry name" value="IGPS_HisA/HisF"/>
</dbReference>
<dbReference type="InterPro" id="IPR011060">
    <property type="entry name" value="RibuloseP-bd_barrel"/>
</dbReference>
<dbReference type="NCBIfam" id="TIGR00735">
    <property type="entry name" value="hisF"/>
    <property type="match status" value="1"/>
</dbReference>
<dbReference type="PANTHER" id="PTHR21235:SF2">
    <property type="entry name" value="IMIDAZOLE GLYCEROL PHOSPHATE SYNTHASE HISHF"/>
    <property type="match status" value="1"/>
</dbReference>
<dbReference type="PANTHER" id="PTHR21235">
    <property type="entry name" value="IMIDAZOLE GLYCEROL PHOSPHATE SYNTHASE SUBUNIT HISF/H IGP SYNTHASE SUBUNIT HISF/H"/>
    <property type="match status" value="1"/>
</dbReference>
<dbReference type="Pfam" id="PF00977">
    <property type="entry name" value="His_biosynth"/>
    <property type="match status" value="1"/>
</dbReference>
<dbReference type="SUPFAM" id="SSF51366">
    <property type="entry name" value="Ribulose-phoshate binding barrel"/>
    <property type="match status" value="1"/>
</dbReference>
<feature type="chain" id="PRO_1000063073" description="Imidazole glycerol phosphate synthase subunit HisF">
    <location>
        <begin position="1"/>
        <end position="252"/>
    </location>
</feature>
<feature type="active site" evidence="1">
    <location>
        <position position="11"/>
    </location>
</feature>
<feature type="active site" evidence="1">
    <location>
        <position position="130"/>
    </location>
</feature>
<organism>
    <name type="scientific">Lacticaseibacillus paracasei (strain ATCC 334 / BCRC 17002 / CCUG 31169 / CIP 107868 / KCTC 3260 / NRRL B-441)</name>
    <name type="common">Lactobacillus paracasei</name>
    <dbReference type="NCBI Taxonomy" id="321967"/>
    <lineage>
        <taxon>Bacteria</taxon>
        <taxon>Bacillati</taxon>
        <taxon>Bacillota</taxon>
        <taxon>Bacilli</taxon>
        <taxon>Lactobacillales</taxon>
        <taxon>Lactobacillaceae</taxon>
        <taxon>Lacticaseibacillus</taxon>
    </lineage>
</organism>
<protein>
    <recommendedName>
        <fullName evidence="1">Imidazole glycerol phosphate synthase subunit HisF</fullName>
        <ecNumber evidence="1">4.3.2.10</ecNumber>
    </recommendedName>
    <alternativeName>
        <fullName evidence="1">IGP synthase cyclase subunit</fullName>
    </alternativeName>
    <alternativeName>
        <fullName evidence="1">IGP synthase subunit HisF</fullName>
    </alternativeName>
    <alternativeName>
        <fullName evidence="1">ImGP synthase subunit HisF</fullName>
        <shortName evidence="1">IGPS subunit HisF</shortName>
    </alternativeName>
</protein>
<sequence>MLTKRIIPCLDVDHGRVKKGINFVQLKDVGDPVAIAKAYQEQGADELVFLDITATNEARGTLVQTVEAVANQVFMPLTVGGGIQSVADMHALLRAGADKVSLNSAAVADPSLLTAGAEKFGRQAIVAAIDTRWQADQNRYQVTVNGGRTPVDLDAITWAKQAVAAGAGELLVTSMDADGTESGFDLRLYQQLTAAVQVPIIASGGAGSTADFVQLFTQTTVSAGLAASIFHFGELTVPQVKTALKQAKVAVR</sequence>
<accession>Q039B5</accession>